<protein>
    <recommendedName>
        <fullName evidence="1">Ribosome-recycling factor</fullName>
        <shortName evidence="1">RRF</shortName>
    </recommendedName>
    <alternativeName>
        <fullName evidence="1">Ribosome-releasing factor</fullName>
    </alternativeName>
</protein>
<organism>
    <name type="scientific">Streptococcus pneumoniae (strain Taiwan19F-14)</name>
    <dbReference type="NCBI Taxonomy" id="487213"/>
    <lineage>
        <taxon>Bacteria</taxon>
        <taxon>Bacillati</taxon>
        <taxon>Bacillota</taxon>
        <taxon>Bacilli</taxon>
        <taxon>Lactobacillales</taxon>
        <taxon>Streptococcaceae</taxon>
        <taxon>Streptococcus</taxon>
    </lineage>
</organism>
<feature type="chain" id="PRO_1000194958" description="Ribosome-recycling factor">
    <location>
        <begin position="1"/>
        <end position="185"/>
    </location>
</feature>
<name>RRF_STRZT</name>
<dbReference type="EMBL" id="CP000921">
    <property type="protein sequence ID" value="ACO23377.1"/>
    <property type="molecule type" value="Genomic_DNA"/>
</dbReference>
<dbReference type="RefSeq" id="WP_000024409.1">
    <property type="nucleotide sequence ID" value="NC_012469.1"/>
</dbReference>
<dbReference type="SMR" id="C1CRV3"/>
<dbReference type="KEGG" id="snt:SPT_1259"/>
<dbReference type="HOGENOM" id="CLU_073981_2_0_9"/>
<dbReference type="GO" id="GO:0005737">
    <property type="term" value="C:cytoplasm"/>
    <property type="evidence" value="ECO:0007669"/>
    <property type="project" value="UniProtKB-SubCell"/>
</dbReference>
<dbReference type="GO" id="GO:0043023">
    <property type="term" value="F:ribosomal large subunit binding"/>
    <property type="evidence" value="ECO:0007669"/>
    <property type="project" value="TreeGrafter"/>
</dbReference>
<dbReference type="GO" id="GO:0006415">
    <property type="term" value="P:translational termination"/>
    <property type="evidence" value="ECO:0007669"/>
    <property type="project" value="UniProtKB-UniRule"/>
</dbReference>
<dbReference type="CDD" id="cd00520">
    <property type="entry name" value="RRF"/>
    <property type="match status" value="1"/>
</dbReference>
<dbReference type="FunFam" id="1.10.132.20:FF:000001">
    <property type="entry name" value="Ribosome-recycling factor"/>
    <property type="match status" value="1"/>
</dbReference>
<dbReference type="FunFam" id="3.30.1360.40:FF:000001">
    <property type="entry name" value="Ribosome-recycling factor"/>
    <property type="match status" value="1"/>
</dbReference>
<dbReference type="Gene3D" id="3.30.1360.40">
    <property type="match status" value="1"/>
</dbReference>
<dbReference type="Gene3D" id="1.10.132.20">
    <property type="entry name" value="Ribosome-recycling factor"/>
    <property type="match status" value="1"/>
</dbReference>
<dbReference type="HAMAP" id="MF_00040">
    <property type="entry name" value="RRF"/>
    <property type="match status" value="1"/>
</dbReference>
<dbReference type="InterPro" id="IPR002661">
    <property type="entry name" value="Ribosome_recyc_fac"/>
</dbReference>
<dbReference type="InterPro" id="IPR023584">
    <property type="entry name" value="Ribosome_recyc_fac_dom"/>
</dbReference>
<dbReference type="InterPro" id="IPR036191">
    <property type="entry name" value="RRF_sf"/>
</dbReference>
<dbReference type="NCBIfam" id="TIGR00496">
    <property type="entry name" value="frr"/>
    <property type="match status" value="1"/>
</dbReference>
<dbReference type="PANTHER" id="PTHR20982:SF3">
    <property type="entry name" value="MITOCHONDRIAL RIBOSOME RECYCLING FACTOR PSEUDO 1"/>
    <property type="match status" value="1"/>
</dbReference>
<dbReference type="PANTHER" id="PTHR20982">
    <property type="entry name" value="RIBOSOME RECYCLING FACTOR"/>
    <property type="match status" value="1"/>
</dbReference>
<dbReference type="Pfam" id="PF01765">
    <property type="entry name" value="RRF"/>
    <property type="match status" value="1"/>
</dbReference>
<dbReference type="SUPFAM" id="SSF55194">
    <property type="entry name" value="Ribosome recycling factor, RRF"/>
    <property type="match status" value="1"/>
</dbReference>
<proteinExistence type="inferred from homology"/>
<comment type="function">
    <text evidence="1">Responsible for the release of ribosomes from messenger RNA at the termination of protein biosynthesis. May increase the efficiency of translation by recycling ribosomes from one round of translation to another.</text>
</comment>
<comment type="subcellular location">
    <subcellularLocation>
        <location evidence="1">Cytoplasm</location>
    </subcellularLocation>
</comment>
<comment type="similarity">
    <text evidence="1">Belongs to the RRF family.</text>
</comment>
<accession>C1CRV3</accession>
<sequence>MANVIIEKAKERMTQSHQSLAREFGGIRAGRANASLLDRVHVEYYGVETPLNQIASITIPEARVLLVTPFDKSSLKDIERALNASDLGITPANDGSVIRLVIPALTEETRRDLAKEVKKVGENAKVAVRNIRRDAMDEAKKQEKAKEITEDELKTLEKDIQKVTDDAVKHIDDMTANKEKELLEV</sequence>
<reference key="1">
    <citation type="journal article" date="2010" name="Genome Biol.">
        <title>Structure and dynamics of the pan-genome of Streptococcus pneumoniae and closely related species.</title>
        <authorList>
            <person name="Donati C."/>
            <person name="Hiller N.L."/>
            <person name="Tettelin H."/>
            <person name="Muzzi A."/>
            <person name="Croucher N.J."/>
            <person name="Angiuoli S.V."/>
            <person name="Oggioni M."/>
            <person name="Dunning Hotopp J.C."/>
            <person name="Hu F.Z."/>
            <person name="Riley D.R."/>
            <person name="Covacci A."/>
            <person name="Mitchell T.J."/>
            <person name="Bentley S.D."/>
            <person name="Kilian M."/>
            <person name="Ehrlich G.D."/>
            <person name="Rappuoli R."/>
            <person name="Moxon E.R."/>
            <person name="Masignani V."/>
        </authorList>
    </citation>
    <scope>NUCLEOTIDE SEQUENCE [LARGE SCALE GENOMIC DNA]</scope>
    <source>
        <strain>Taiwan19F-14</strain>
    </source>
</reference>
<gene>
    <name evidence="1" type="primary">frr</name>
    <name type="ordered locus">SPT_1259</name>
</gene>
<evidence type="ECO:0000255" key="1">
    <source>
        <dbReference type="HAMAP-Rule" id="MF_00040"/>
    </source>
</evidence>
<keyword id="KW-0963">Cytoplasm</keyword>
<keyword id="KW-0648">Protein biosynthesis</keyword>